<name>FABZ_WOLWR</name>
<sequence>MQFNISDIIKILPHSYPFLLVDRVIECDPGKSIKAIKNVTFNEPFFIGHFPGHPIMPGVLIIESLAQASAICVLGKETIENKVVYLRSIENAKFRKPVTPGDTLILQANIQSVCLGVHKFRCIASVSEEKVAEATISAVLQNK</sequence>
<comment type="function">
    <text evidence="1">Involved in unsaturated fatty acids biosynthesis. Catalyzes the dehydration of short chain beta-hydroxyacyl-ACPs and long chain saturated and unsaturated beta-hydroxyacyl-ACPs.</text>
</comment>
<comment type="catalytic activity">
    <reaction evidence="1">
        <text>a (3R)-hydroxyacyl-[ACP] = a (2E)-enoyl-[ACP] + H2O</text>
        <dbReference type="Rhea" id="RHEA:13097"/>
        <dbReference type="Rhea" id="RHEA-COMP:9925"/>
        <dbReference type="Rhea" id="RHEA-COMP:9945"/>
        <dbReference type="ChEBI" id="CHEBI:15377"/>
        <dbReference type="ChEBI" id="CHEBI:78784"/>
        <dbReference type="ChEBI" id="CHEBI:78827"/>
        <dbReference type="EC" id="4.2.1.59"/>
    </reaction>
</comment>
<comment type="subcellular location">
    <subcellularLocation>
        <location evidence="1">Cytoplasm</location>
    </subcellularLocation>
</comment>
<comment type="similarity">
    <text evidence="1">Belongs to the thioester dehydratase family. FabZ subfamily.</text>
</comment>
<proteinExistence type="inferred from homology"/>
<gene>
    <name evidence="1" type="primary">fabZ</name>
    <name type="ordered locus">WRi_011170</name>
</gene>
<accession>C0R4H1</accession>
<dbReference type="EC" id="4.2.1.59" evidence="1"/>
<dbReference type="EMBL" id="CP001391">
    <property type="protein sequence ID" value="ACN95813.1"/>
    <property type="molecule type" value="Genomic_DNA"/>
</dbReference>
<dbReference type="RefSeq" id="WP_006279640.1">
    <property type="nucleotide sequence ID" value="NZ_MKIF01000087.1"/>
</dbReference>
<dbReference type="SMR" id="C0R4H1"/>
<dbReference type="STRING" id="66084.WRi_011170"/>
<dbReference type="KEGG" id="wri:WRi_011170"/>
<dbReference type="HOGENOM" id="CLU_078912_3_0_5"/>
<dbReference type="Proteomes" id="UP000001293">
    <property type="component" value="Chromosome"/>
</dbReference>
<dbReference type="GO" id="GO:0005737">
    <property type="term" value="C:cytoplasm"/>
    <property type="evidence" value="ECO:0007669"/>
    <property type="project" value="UniProtKB-SubCell"/>
</dbReference>
<dbReference type="GO" id="GO:0016020">
    <property type="term" value="C:membrane"/>
    <property type="evidence" value="ECO:0007669"/>
    <property type="project" value="GOC"/>
</dbReference>
<dbReference type="GO" id="GO:0019171">
    <property type="term" value="F:(3R)-hydroxyacyl-[acyl-carrier-protein] dehydratase activity"/>
    <property type="evidence" value="ECO:0007669"/>
    <property type="project" value="UniProtKB-EC"/>
</dbReference>
<dbReference type="GO" id="GO:0006633">
    <property type="term" value="P:fatty acid biosynthetic process"/>
    <property type="evidence" value="ECO:0007669"/>
    <property type="project" value="UniProtKB-UniRule"/>
</dbReference>
<dbReference type="GO" id="GO:0009245">
    <property type="term" value="P:lipid A biosynthetic process"/>
    <property type="evidence" value="ECO:0007669"/>
    <property type="project" value="UniProtKB-UniRule"/>
</dbReference>
<dbReference type="CDD" id="cd01288">
    <property type="entry name" value="FabZ"/>
    <property type="match status" value="1"/>
</dbReference>
<dbReference type="FunFam" id="3.10.129.10:FF:000001">
    <property type="entry name" value="3-hydroxyacyl-[acyl-carrier-protein] dehydratase FabZ"/>
    <property type="match status" value="1"/>
</dbReference>
<dbReference type="Gene3D" id="3.10.129.10">
    <property type="entry name" value="Hotdog Thioesterase"/>
    <property type="match status" value="1"/>
</dbReference>
<dbReference type="HAMAP" id="MF_00406">
    <property type="entry name" value="FabZ"/>
    <property type="match status" value="1"/>
</dbReference>
<dbReference type="InterPro" id="IPR013114">
    <property type="entry name" value="FabA_FabZ"/>
</dbReference>
<dbReference type="InterPro" id="IPR010084">
    <property type="entry name" value="FabZ"/>
</dbReference>
<dbReference type="InterPro" id="IPR029069">
    <property type="entry name" value="HotDog_dom_sf"/>
</dbReference>
<dbReference type="NCBIfam" id="TIGR01750">
    <property type="entry name" value="fabZ"/>
    <property type="match status" value="1"/>
</dbReference>
<dbReference type="NCBIfam" id="NF000582">
    <property type="entry name" value="PRK00006.1"/>
    <property type="match status" value="1"/>
</dbReference>
<dbReference type="PANTHER" id="PTHR30272">
    <property type="entry name" value="3-HYDROXYACYL-[ACYL-CARRIER-PROTEIN] DEHYDRATASE"/>
    <property type="match status" value="1"/>
</dbReference>
<dbReference type="PANTHER" id="PTHR30272:SF1">
    <property type="entry name" value="3-HYDROXYACYL-[ACYL-CARRIER-PROTEIN] DEHYDRATASE"/>
    <property type="match status" value="1"/>
</dbReference>
<dbReference type="Pfam" id="PF07977">
    <property type="entry name" value="FabA"/>
    <property type="match status" value="1"/>
</dbReference>
<dbReference type="SUPFAM" id="SSF54637">
    <property type="entry name" value="Thioesterase/thiol ester dehydrase-isomerase"/>
    <property type="match status" value="1"/>
</dbReference>
<evidence type="ECO:0000255" key="1">
    <source>
        <dbReference type="HAMAP-Rule" id="MF_00406"/>
    </source>
</evidence>
<keyword id="KW-0963">Cytoplasm</keyword>
<keyword id="KW-0441">Lipid A biosynthesis</keyword>
<keyword id="KW-0444">Lipid biosynthesis</keyword>
<keyword id="KW-0443">Lipid metabolism</keyword>
<keyword id="KW-0456">Lyase</keyword>
<feature type="chain" id="PRO_1000134724" description="3-hydroxyacyl-[acyl-carrier-protein] dehydratase FabZ">
    <location>
        <begin position="1"/>
        <end position="143"/>
    </location>
</feature>
<feature type="active site" evidence="1">
    <location>
        <position position="49"/>
    </location>
</feature>
<protein>
    <recommendedName>
        <fullName evidence="1">3-hydroxyacyl-[acyl-carrier-protein] dehydratase FabZ</fullName>
        <ecNumber evidence="1">4.2.1.59</ecNumber>
    </recommendedName>
    <alternativeName>
        <fullName evidence="1">(3R)-hydroxymyristoyl-[acyl-carrier-protein] dehydratase</fullName>
        <shortName evidence="1">(3R)-hydroxymyristoyl-ACP dehydrase</shortName>
    </alternativeName>
    <alternativeName>
        <fullName evidence="1">Beta-hydroxyacyl-ACP dehydratase</fullName>
    </alternativeName>
</protein>
<organism>
    <name type="scientific">Wolbachia sp. subsp. Drosophila simulans (strain wRi)</name>
    <dbReference type="NCBI Taxonomy" id="66084"/>
    <lineage>
        <taxon>Bacteria</taxon>
        <taxon>Pseudomonadati</taxon>
        <taxon>Pseudomonadota</taxon>
        <taxon>Alphaproteobacteria</taxon>
        <taxon>Rickettsiales</taxon>
        <taxon>Anaplasmataceae</taxon>
        <taxon>Wolbachieae</taxon>
        <taxon>Wolbachia</taxon>
    </lineage>
</organism>
<reference key="1">
    <citation type="journal article" date="2009" name="Proc. Natl. Acad. Sci. U.S.A.">
        <title>The mosaic genome structure of the Wolbachia wRi strain infecting Drosophila simulans.</title>
        <authorList>
            <person name="Klasson L."/>
            <person name="Westberg J."/>
            <person name="Sapountzis P."/>
            <person name="Naeslund K."/>
            <person name="Lutnaes Y."/>
            <person name="Darby A.C."/>
            <person name="Veneti Z."/>
            <person name="Chen L."/>
            <person name="Braig H.R."/>
            <person name="Garrett R."/>
            <person name="Bourtzis K."/>
            <person name="Andersson S.G."/>
        </authorList>
    </citation>
    <scope>NUCLEOTIDE SEQUENCE [LARGE SCALE GENOMIC DNA]</scope>
    <source>
        <strain>wRi</strain>
    </source>
</reference>